<organism>
    <name type="scientific">Lactobacillus johnsonii (strain CNCM I-12250 / La1 / NCC 533)</name>
    <dbReference type="NCBI Taxonomy" id="257314"/>
    <lineage>
        <taxon>Bacteria</taxon>
        <taxon>Bacillati</taxon>
        <taxon>Bacillota</taxon>
        <taxon>Bacilli</taxon>
        <taxon>Lactobacillales</taxon>
        <taxon>Lactobacillaceae</taxon>
        <taxon>Lactobacillus</taxon>
    </lineage>
</organism>
<keyword id="KW-0963">Cytoplasm</keyword>
<keyword id="KW-0251">Elongation factor</keyword>
<keyword id="KW-0648">Protein biosynthesis</keyword>
<feature type="chain" id="PRO_0000161134" description="Elongation factor Ts">
    <location>
        <begin position="1"/>
        <end position="341"/>
    </location>
</feature>
<feature type="region of interest" description="Involved in Mg(2+) ion dislocation from EF-Tu" evidence="1">
    <location>
        <begin position="80"/>
        <end position="83"/>
    </location>
</feature>
<name>EFTS_LACJO</name>
<comment type="function">
    <text evidence="1">Associates with the EF-Tu.GDP complex and induces the exchange of GDP to GTP. It remains bound to the aminoacyl-tRNA.EF-Tu.GTP complex up to the GTP hydrolysis stage on the ribosome.</text>
</comment>
<comment type="subcellular location">
    <subcellularLocation>
        <location evidence="1">Cytoplasm</location>
    </subcellularLocation>
</comment>
<comment type="similarity">
    <text evidence="1">Belongs to the EF-Ts family.</text>
</comment>
<protein>
    <recommendedName>
        <fullName evidence="1">Elongation factor Ts</fullName>
        <shortName evidence="1">EF-Ts</shortName>
    </recommendedName>
</protein>
<gene>
    <name evidence="1" type="primary">tsf</name>
    <name type="ordered locus">LJ_1499</name>
</gene>
<reference key="1">
    <citation type="journal article" date="2004" name="Proc. Natl. Acad. Sci. U.S.A.">
        <title>The genome sequence of the probiotic intestinal bacterium Lactobacillus johnsonii NCC 533.</title>
        <authorList>
            <person name="Pridmore R.D."/>
            <person name="Berger B."/>
            <person name="Desiere F."/>
            <person name="Vilanova D."/>
            <person name="Barretto C."/>
            <person name="Pittet A.-C."/>
            <person name="Zwahlen M.-C."/>
            <person name="Rouvet M."/>
            <person name="Altermann E."/>
            <person name="Barrangou R."/>
            <person name="Mollet B."/>
            <person name="Mercenier A."/>
            <person name="Klaenhammer T."/>
            <person name="Arigoni F."/>
            <person name="Schell M.A."/>
        </authorList>
    </citation>
    <scope>NUCLEOTIDE SEQUENCE [LARGE SCALE GENOMIC DNA]</scope>
    <source>
        <strain>CNCM I-1225 / La1 / NCC 533</strain>
    </source>
</reference>
<accession>P61334</accession>
<sequence>MAKITAQLVKELRERTGAGVMDAKKALVEVDGDMDKAVQYLRDKGMAKAAKKADRVAAEGLTGVYVDGNVAAITEVNSETDFVSSNDKFVKLVNEATKTIAEGKPADMEAAEELKMADGTTLGQSFVDATATIGEKIVLRRFALEEKTDDQEFGAYQHNGGQIGVITVLEGADAATAKHLAMHIAAMSPKVISPDELDDEFITDQLAVMNHKIDQDNESRALVNKKPLPHLVYGSEKQLSDDVLAKAKEDIKAELKEEGKPEKIWDKIIPGKMQRFIDDNTQVDKQFAVLSQNYIMDDSKTVGEFLKEKGAKLVAFQRYEVGEGIEKKQEDFAAEVREQMK</sequence>
<proteinExistence type="inferred from homology"/>
<evidence type="ECO:0000255" key="1">
    <source>
        <dbReference type="HAMAP-Rule" id="MF_00050"/>
    </source>
</evidence>
<dbReference type="EMBL" id="AE017198">
    <property type="protein sequence ID" value="AAS09267.1"/>
    <property type="molecule type" value="Genomic_DNA"/>
</dbReference>
<dbReference type="RefSeq" id="WP_004897121.1">
    <property type="nucleotide sequence ID" value="NC_005362.1"/>
</dbReference>
<dbReference type="SMR" id="P61334"/>
<dbReference type="GeneID" id="83570174"/>
<dbReference type="KEGG" id="ljo:LJ_1499"/>
<dbReference type="eggNOG" id="COG0264">
    <property type="taxonomic scope" value="Bacteria"/>
</dbReference>
<dbReference type="HOGENOM" id="CLU_047155_0_1_9"/>
<dbReference type="Proteomes" id="UP000000581">
    <property type="component" value="Chromosome"/>
</dbReference>
<dbReference type="GO" id="GO:0005737">
    <property type="term" value="C:cytoplasm"/>
    <property type="evidence" value="ECO:0007669"/>
    <property type="project" value="UniProtKB-SubCell"/>
</dbReference>
<dbReference type="GO" id="GO:0003746">
    <property type="term" value="F:translation elongation factor activity"/>
    <property type="evidence" value="ECO:0007669"/>
    <property type="project" value="UniProtKB-UniRule"/>
</dbReference>
<dbReference type="CDD" id="cd14275">
    <property type="entry name" value="UBA_EF-Ts"/>
    <property type="match status" value="1"/>
</dbReference>
<dbReference type="FunFam" id="1.10.286.20:FF:000004">
    <property type="entry name" value="Elongation factor Ts"/>
    <property type="match status" value="1"/>
</dbReference>
<dbReference type="FunFam" id="1.10.8.10:FF:000001">
    <property type="entry name" value="Elongation factor Ts"/>
    <property type="match status" value="1"/>
</dbReference>
<dbReference type="Gene3D" id="1.10.286.20">
    <property type="match status" value="1"/>
</dbReference>
<dbReference type="Gene3D" id="1.10.8.10">
    <property type="entry name" value="DNA helicase RuvA subunit, C-terminal domain"/>
    <property type="match status" value="1"/>
</dbReference>
<dbReference type="Gene3D" id="3.30.479.20">
    <property type="entry name" value="Elongation factor Ts, dimerisation domain"/>
    <property type="match status" value="2"/>
</dbReference>
<dbReference type="HAMAP" id="MF_00050">
    <property type="entry name" value="EF_Ts"/>
    <property type="match status" value="1"/>
</dbReference>
<dbReference type="InterPro" id="IPR036402">
    <property type="entry name" value="EF-Ts_dimer_sf"/>
</dbReference>
<dbReference type="InterPro" id="IPR001816">
    <property type="entry name" value="Transl_elong_EFTs/EF1B"/>
</dbReference>
<dbReference type="InterPro" id="IPR014039">
    <property type="entry name" value="Transl_elong_EFTs/EF1B_dimer"/>
</dbReference>
<dbReference type="InterPro" id="IPR018101">
    <property type="entry name" value="Transl_elong_Ts_CS"/>
</dbReference>
<dbReference type="InterPro" id="IPR009060">
    <property type="entry name" value="UBA-like_sf"/>
</dbReference>
<dbReference type="NCBIfam" id="TIGR00116">
    <property type="entry name" value="tsf"/>
    <property type="match status" value="1"/>
</dbReference>
<dbReference type="PANTHER" id="PTHR11741">
    <property type="entry name" value="ELONGATION FACTOR TS"/>
    <property type="match status" value="1"/>
</dbReference>
<dbReference type="PANTHER" id="PTHR11741:SF0">
    <property type="entry name" value="ELONGATION FACTOR TS, MITOCHONDRIAL"/>
    <property type="match status" value="1"/>
</dbReference>
<dbReference type="Pfam" id="PF00889">
    <property type="entry name" value="EF_TS"/>
    <property type="match status" value="2"/>
</dbReference>
<dbReference type="SUPFAM" id="SSF54713">
    <property type="entry name" value="Elongation factor Ts (EF-Ts), dimerisation domain"/>
    <property type="match status" value="3"/>
</dbReference>
<dbReference type="SUPFAM" id="SSF46934">
    <property type="entry name" value="UBA-like"/>
    <property type="match status" value="1"/>
</dbReference>
<dbReference type="PROSITE" id="PS01126">
    <property type="entry name" value="EF_TS_1"/>
    <property type="match status" value="1"/>
</dbReference>
<dbReference type="PROSITE" id="PS01127">
    <property type="entry name" value="EF_TS_2"/>
    <property type="match status" value="1"/>
</dbReference>